<name>DSBB_BLOFL</name>
<dbReference type="EMBL" id="BX248583">
    <property type="protein sequence ID" value="CAD83500.1"/>
    <property type="molecule type" value="Genomic_DNA"/>
</dbReference>
<dbReference type="STRING" id="203907.Bfl438"/>
<dbReference type="KEGG" id="bfl:Bfl438"/>
<dbReference type="eggNOG" id="COG1495">
    <property type="taxonomic scope" value="Bacteria"/>
</dbReference>
<dbReference type="HOGENOM" id="CLU_098660_2_0_6"/>
<dbReference type="OrthoDB" id="3711263at2"/>
<dbReference type="Proteomes" id="UP000002192">
    <property type="component" value="Chromosome"/>
</dbReference>
<dbReference type="GO" id="GO:0005886">
    <property type="term" value="C:plasma membrane"/>
    <property type="evidence" value="ECO:0007669"/>
    <property type="project" value="UniProtKB-SubCell"/>
</dbReference>
<dbReference type="GO" id="GO:0009055">
    <property type="term" value="F:electron transfer activity"/>
    <property type="evidence" value="ECO:0007669"/>
    <property type="project" value="UniProtKB-UniRule"/>
</dbReference>
<dbReference type="GO" id="GO:0015035">
    <property type="term" value="F:protein-disulfide reductase activity"/>
    <property type="evidence" value="ECO:0007669"/>
    <property type="project" value="UniProtKB-UniRule"/>
</dbReference>
<dbReference type="GO" id="GO:0006457">
    <property type="term" value="P:protein folding"/>
    <property type="evidence" value="ECO:0007669"/>
    <property type="project" value="InterPro"/>
</dbReference>
<dbReference type="Gene3D" id="1.20.1550.10">
    <property type="entry name" value="DsbB-like"/>
    <property type="match status" value="1"/>
</dbReference>
<dbReference type="HAMAP" id="MF_00286">
    <property type="entry name" value="DsbB"/>
    <property type="match status" value="1"/>
</dbReference>
<dbReference type="InterPro" id="IPR003752">
    <property type="entry name" value="DiS_bond_form_DsbB/BdbC"/>
</dbReference>
<dbReference type="InterPro" id="IPR022920">
    <property type="entry name" value="Disulphide_bond_form_DsbB"/>
</dbReference>
<dbReference type="InterPro" id="IPR050183">
    <property type="entry name" value="DsbB"/>
</dbReference>
<dbReference type="InterPro" id="IPR023380">
    <property type="entry name" value="DsbB-like_sf"/>
</dbReference>
<dbReference type="NCBIfam" id="NF002485">
    <property type="entry name" value="PRK01749.1"/>
    <property type="match status" value="1"/>
</dbReference>
<dbReference type="PANTHER" id="PTHR36570">
    <property type="entry name" value="DISULFIDE BOND FORMATION PROTEIN B"/>
    <property type="match status" value="1"/>
</dbReference>
<dbReference type="PANTHER" id="PTHR36570:SF2">
    <property type="entry name" value="DISULFIDE BOND FORMATION PROTEIN B"/>
    <property type="match status" value="1"/>
</dbReference>
<dbReference type="Pfam" id="PF02600">
    <property type="entry name" value="DsbB"/>
    <property type="match status" value="1"/>
</dbReference>
<dbReference type="SUPFAM" id="SSF158442">
    <property type="entry name" value="DsbB-like"/>
    <property type="match status" value="1"/>
</dbReference>
<sequence length="174" mass="20489">MLHIFYIYSKSRKFWAILICSSISLISIALLNQFFFLLKPCILCIYQRCSLFGITIAGLIALISPKTTLLRLFSIFIWLYSAIKGLYFSNIHMQTTLHPSSSLTCDLFVSFPNWLPLNKWYPIIFDSKISNCYSYPQYLLYLEISQWMLLFFLIYLIIAIFTIISQCHNLFQKK</sequence>
<proteinExistence type="inferred from homology"/>
<feature type="chain" id="PRO_0000298340" description="Disulfide bond formation protein B">
    <location>
        <begin position="1"/>
        <end position="174"/>
    </location>
</feature>
<feature type="topological domain" description="Cytoplasmic" evidence="1">
    <location>
        <begin position="1"/>
        <end position="14"/>
    </location>
</feature>
<feature type="transmembrane region" description="Helical" evidence="1">
    <location>
        <begin position="15"/>
        <end position="31"/>
    </location>
</feature>
<feature type="topological domain" description="Periplasmic" evidence="1">
    <location>
        <begin position="32"/>
        <end position="49"/>
    </location>
</feature>
<feature type="transmembrane region" description="Helical" evidence="1">
    <location>
        <begin position="50"/>
        <end position="65"/>
    </location>
</feature>
<feature type="topological domain" description="Cytoplasmic" evidence="1">
    <location>
        <begin position="66"/>
        <end position="72"/>
    </location>
</feature>
<feature type="transmembrane region" description="Helical" evidence="1">
    <location>
        <begin position="73"/>
        <end position="90"/>
    </location>
</feature>
<feature type="topological domain" description="Periplasmic" evidence="1">
    <location>
        <begin position="91"/>
        <end position="146"/>
    </location>
</feature>
<feature type="transmembrane region" description="Helical" evidence="1">
    <location>
        <begin position="147"/>
        <end position="165"/>
    </location>
</feature>
<feature type="topological domain" description="Cytoplasmic" evidence="1">
    <location>
        <begin position="166"/>
        <end position="174"/>
    </location>
</feature>
<feature type="disulfide bond" description="Redox-active" evidence="1">
    <location>
        <begin position="41"/>
        <end position="44"/>
    </location>
</feature>
<feature type="disulfide bond" description="Redox-active" evidence="1">
    <location>
        <begin position="105"/>
        <end position="132"/>
    </location>
</feature>
<accession>Q7VQZ2</accession>
<organism>
    <name type="scientific">Blochmanniella floridana</name>
    <dbReference type="NCBI Taxonomy" id="203907"/>
    <lineage>
        <taxon>Bacteria</taxon>
        <taxon>Pseudomonadati</taxon>
        <taxon>Pseudomonadota</taxon>
        <taxon>Gammaproteobacteria</taxon>
        <taxon>Enterobacterales</taxon>
        <taxon>Enterobacteriaceae</taxon>
        <taxon>ant endosymbionts</taxon>
        <taxon>Candidatus Blochmanniella</taxon>
    </lineage>
</organism>
<reference key="1">
    <citation type="journal article" date="2003" name="Proc. Natl. Acad. Sci. U.S.A.">
        <title>The genome sequence of Blochmannia floridanus: comparative analysis of reduced genomes.</title>
        <authorList>
            <person name="Gil R."/>
            <person name="Silva F.J."/>
            <person name="Zientz E."/>
            <person name="Delmotte F."/>
            <person name="Gonzalez-Candelas F."/>
            <person name="Latorre A."/>
            <person name="Rausell C."/>
            <person name="Kamerbeek J."/>
            <person name="Gadau J."/>
            <person name="Hoelldobler B."/>
            <person name="van Ham R.C.H.J."/>
            <person name="Gross R."/>
            <person name="Moya A."/>
        </authorList>
    </citation>
    <scope>NUCLEOTIDE SEQUENCE [LARGE SCALE GENOMIC DNA]</scope>
</reference>
<evidence type="ECO:0000255" key="1">
    <source>
        <dbReference type="HAMAP-Rule" id="MF_00286"/>
    </source>
</evidence>
<keyword id="KW-0997">Cell inner membrane</keyword>
<keyword id="KW-1003">Cell membrane</keyword>
<keyword id="KW-0143">Chaperone</keyword>
<keyword id="KW-1015">Disulfide bond</keyword>
<keyword id="KW-0249">Electron transport</keyword>
<keyword id="KW-0472">Membrane</keyword>
<keyword id="KW-0560">Oxidoreductase</keyword>
<keyword id="KW-0676">Redox-active center</keyword>
<keyword id="KW-1185">Reference proteome</keyword>
<keyword id="KW-0812">Transmembrane</keyword>
<keyword id="KW-1133">Transmembrane helix</keyword>
<keyword id="KW-0813">Transport</keyword>
<gene>
    <name evidence="1" type="primary">dsbB</name>
    <name type="ordered locus">Bfl438</name>
</gene>
<protein>
    <recommendedName>
        <fullName evidence="1">Disulfide bond formation protein B</fullName>
    </recommendedName>
    <alternativeName>
        <fullName evidence="1">Disulfide oxidoreductase</fullName>
    </alternativeName>
</protein>
<comment type="function">
    <text evidence="1">Required for disulfide bond formation in some periplasmic proteins. Acts by oxidizing the DsbA protein.</text>
</comment>
<comment type="subcellular location">
    <subcellularLocation>
        <location evidence="1">Cell inner membrane</location>
        <topology evidence="1">Multi-pass membrane protein</topology>
    </subcellularLocation>
</comment>
<comment type="similarity">
    <text evidence="1">Belongs to the DsbB family.</text>
</comment>